<dbReference type="EMBL" id="FM180568">
    <property type="protein sequence ID" value="CAS09766.1"/>
    <property type="molecule type" value="Genomic_DNA"/>
</dbReference>
<dbReference type="RefSeq" id="WP_001197823.1">
    <property type="nucleotide sequence ID" value="NC_011601.1"/>
</dbReference>
<dbReference type="SMR" id="B7UTB3"/>
<dbReference type="KEGG" id="ecg:E2348C_2218"/>
<dbReference type="HOGENOM" id="CLU_002755_1_2_6"/>
<dbReference type="Proteomes" id="UP000008205">
    <property type="component" value="Chromosome"/>
</dbReference>
<dbReference type="GO" id="GO:0005886">
    <property type="term" value="C:plasma membrane"/>
    <property type="evidence" value="ECO:0007669"/>
    <property type="project" value="UniProtKB-SubCell"/>
</dbReference>
<dbReference type="GO" id="GO:0042910">
    <property type="term" value="F:xenobiotic transmembrane transporter activity"/>
    <property type="evidence" value="ECO:0007669"/>
    <property type="project" value="TreeGrafter"/>
</dbReference>
<dbReference type="FunFam" id="1.20.1640.10:FF:000001">
    <property type="entry name" value="Efflux pump membrane transporter"/>
    <property type="match status" value="1"/>
</dbReference>
<dbReference type="FunFam" id="3.30.70.1430:FF:000001">
    <property type="entry name" value="Efflux pump membrane transporter"/>
    <property type="match status" value="1"/>
</dbReference>
<dbReference type="FunFam" id="3.30.2090.10:FF:000003">
    <property type="entry name" value="Multidrug resistance protein MdtB"/>
    <property type="match status" value="1"/>
</dbReference>
<dbReference type="FunFam" id="3.30.2090.10:FF:000006">
    <property type="entry name" value="Multidrug resistance protein MdtB"/>
    <property type="match status" value="1"/>
</dbReference>
<dbReference type="Gene3D" id="3.30.70.1430">
    <property type="entry name" value="Multidrug efflux transporter AcrB pore domain"/>
    <property type="match status" value="2"/>
</dbReference>
<dbReference type="Gene3D" id="3.30.70.1440">
    <property type="entry name" value="Multidrug efflux transporter AcrB pore domain"/>
    <property type="match status" value="1"/>
</dbReference>
<dbReference type="Gene3D" id="3.30.70.1320">
    <property type="entry name" value="Multidrug efflux transporter AcrB pore domain like"/>
    <property type="match status" value="1"/>
</dbReference>
<dbReference type="Gene3D" id="3.30.2090.10">
    <property type="entry name" value="Multidrug efflux transporter AcrB TolC docking domain, DN and DC subdomains"/>
    <property type="match status" value="2"/>
</dbReference>
<dbReference type="Gene3D" id="1.20.1640.10">
    <property type="entry name" value="Multidrug efflux transporter AcrB transmembrane domain"/>
    <property type="match status" value="2"/>
</dbReference>
<dbReference type="HAMAP" id="MF_01423">
    <property type="entry name" value="MdtB"/>
    <property type="match status" value="1"/>
</dbReference>
<dbReference type="InterPro" id="IPR027463">
    <property type="entry name" value="AcrB_DN_DC_subdom"/>
</dbReference>
<dbReference type="InterPro" id="IPR001036">
    <property type="entry name" value="Acrflvin-R"/>
</dbReference>
<dbReference type="InterPro" id="IPR022831">
    <property type="entry name" value="Multidrug-R_MdtB"/>
</dbReference>
<dbReference type="NCBIfam" id="NF007798">
    <property type="entry name" value="PRK10503.1"/>
    <property type="match status" value="1"/>
</dbReference>
<dbReference type="NCBIfam" id="NF033617">
    <property type="entry name" value="RND_permease_2"/>
    <property type="match status" value="1"/>
</dbReference>
<dbReference type="PANTHER" id="PTHR32063">
    <property type="match status" value="1"/>
</dbReference>
<dbReference type="PANTHER" id="PTHR32063:SF21">
    <property type="entry name" value="MULTIDRUG RESISTANCE PROTEIN MDTB"/>
    <property type="match status" value="1"/>
</dbReference>
<dbReference type="Pfam" id="PF00873">
    <property type="entry name" value="ACR_tran"/>
    <property type="match status" value="1"/>
</dbReference>
<dbReference type="PRINTS" id="PR00702">
    <property type="entry name" value="ACRIFLAVINRP"/>
</dbReference>
<dbReference type="SUPFAM" id="SSF82693">
    <property type="entry name" value="Multidrug efflux transporter AcrB pore domain, PN1, PN2, PC1 and PC2 subdomains"/>
    <property type="match status" value="3"/>
</dbReference>
<dbReference type="SUPFAM" id="SSF82714">
    <property type="entry name" value="Multidrug efflux transporter AcrB TolC docking domain, DN and DC subdomains"/>
    <property type="match status" value="2"/>
</dbReference>
<dbReference type="SUPFAM" id="SSF82866">
    <property type="entry name" value="Multidrug efflux transporter AcrB transmembrane domain"/>
    <property type="match status" value="2"/>
</dbReference>
<proteinExistence type="evidence at transcript level"/>
<comment type="function">
    <text evidence="1">The MdtABC tripartite complex confers resistance against novobiocin and deoxycholate.</text>
</comment>
<comment type="subunit">
    <text evidence="1">Part of a tripartite efflux system composed of MdtA, MdtB and MdtC. MdtB forms a heteromultimer with MdtC.</text>
</comment>
<comment type="subcellular location">
    <subcellularLocation>
        <location evidence="1">Cell inner membrane</location>
        <topology evidence="1">Multi-pass membrane protein</topology>
    </subcellularLocation>
</comment>
<comment type="induction">
    <text>The mdtABC operon is transcriptionally activated by BaeR.</text>
</comment>
<comment type="similarity">
    <text evidence="1">Belongs to the resistance-nodulation-cell division (RND) (TC 2.A.6) family. MdtB subfamily.</text>
</comment>
<accession>B7UTB3</accession>
<keyword id="KW-0997">Cell inner membrane</keyword>
<keyword id="KW-1003">Cell membrane</keyword>
<keyword id="KW-0472">Membrane</keyword>
<keyword id="KW-1185">Reference proteome</keyword>
<keyword id="KW-0812">Transmembrane</keyword>
<keyword id="KW-1133">Transmembrane helix</keyword>
<keyword id="KW-0813">Transport</keyword>
<name>MDTB_ECO27</name>
<protein>
    <recommendedName>
        <fullName evidence="1">Multidrug resistance protein MdtB</fullName>
    </recommendedName>
    <alternativeName>
        <fullName evidence="1">Multidrug transporter MdtB</fullName>
    </alternativeName>
</protein>
<reference key="1">
    <citation type="journal article" date="2009" name="J. Bacteriol.">
        <title>Complete genome sequence and comparative genome analysis of enteropathogenic Escherichia coli O127:H6 strain E2348/69.</title>
        <authorList>
            <person name="Iguchi A."/>
            <person name="Thomson N.R."/>
            <person name="Ogura Y."/>
            <person name="Saunders D."/>
            <person name="Ooka T."/>
            <person name="Henderson I.R."/>
            <person name="Harris D."/>
            <person name="Asadulghani M."/>
            <person name="Kurokawa K."/>
            <person name="Dean P."/>
            <person name="Kenny B."/>
            <person name="Quail M.A."/>
            <person name="Thurston S."/>
            <person name="Dougan G."/>
            <person name="Hayashi T."/>
            <person name="Parkhill J."/>
            <person name="Frankel G."/>
        </authorList>
    </citation>
    <scope>NUCLEOTIDE SEQUENCE [LARGE SCALE GENOMIC DNA]</scope>
    <source>
        <strain>E2348/69 / EPEC</strain>
    </source>
</reference>
<gene>
    <name evidence="1" type="primary">mdtB</name>
    <name type="ordered locus">E2348C_2218</name>
</gene>
<feature type="chain" id="PRO_1000184864" description="Multidrug resistance protein MdtB">
    <location>
        <begin position="1"/>
        <end position="1040"/>
    </location>
</feature>
<feature type="transmembrane region" description="Helical" evidence="1">
    <location>
        <begin position="25"/>
        <end position="45"/>
    </location>
</feature>
<feature type="transmembrane region" description="Helical" evidence="1">
    <location>
        <begin position="347"/>
        <end position="367"/>
    </location>
</feature>
<feature type="transmembrane region" description="Helical" evidence="1">
    <location>
        <begin position="369"/>
        <end position="389"/>
    </location>
</feature>
<feature type="transmembrane region" description="Helical" evidence="1">
    <location>
        <begin position="396"/>
        <end position="416"/>
    </location>
</feature>
<feature type="transmembrane region" description="Helical" evidence="1">
    <location>
        <begin position="440"/>
        <end position="460"/>
    </location>
</feature>
<feature type="transmembrane region" description="Helical" evidence="1">
    <location>
        <begin position="472"/>
        <end position="492"/>
    </location>
</feature>
<feature type="transmembrane region" description="Helical" evidence="1">
    <location>
        <begin position="537"/>
        <end position="557"/>
    </location>
</feature>
<feature type="transmembrane region" description="Helical" evidence="1">
    <location>
        <begin position="863"/>
        <end position="883"/>
    </location>
</feature>
<feature type="transmembrane region" description="Helical" evidence="1">
    <location>
        <begin position="888"/>
        <end position="908"/>
    </location>
</feature>
<feature type="transmembrane region" description="Helical" evidence="1">
    <location>
        <begin position="911"/>
        <end position="931"/>
    </location>
</feature>
<feature type="transmembrane region" description="Helical" evidence="1">
    <location>
        <begin position="968"/>
        <end position="988"/>
    </location>
</feature>
<feature type="transmembrane region" description="Helical" evidence="1">
    <location>
        <begin position="998"/>
        <end position="1018"/>
    </location>
</feature>
<organism>
    <name type="scientific">Escherichia coli O127:H6 (strain E2348/69 / EPEC)</name>
    <dbReference type="NCBI Taxonomy" id="574521"/>
    <lineage>
        <taxon>Bacteria</taxon>
        <taxon>Pseudomonadati</taxon>
        <taxon>Pseudomonadota</taxon>
        <taxon>Gammaproteobacteria</taxon>
        <taxon>Enterobacterales</taxon>
        <taxon>Enterobacteriaceae</taxon>
        <taxon>Escherichia</taxon>
    </lineage>
</organism>
<evidence type="ECO:0000255" key="1">
    <source>
        <dbReference type="HAMAP-Rule" id="MF_01423"/>
    </source>
</evidence>
<sequence>MQVLPPSSTGGPSRLFIMRPVATTLLMVAILLAGIIGYQALPVSALPEVDYPTIQVVTLYPGASPDVMTSAVTAPLERQFGQMSGLKQMSSQSSGGASVITLQFQLTLPLDVAEQEVQAAINAATNLLPSDLPNPPVYSKVNPADPPIMTLAVTSTAMPMTQVEDMVETRVAQKISQISGVGLVTLSGGQRPAVRVKLNAQAIAALGLTSETVRTAITGANVNSAKGSLDGPSRAVTLSANDQMQSAEEYRQLIIAYQNGAPIRLGDVATVEQGAENSWLGAWANKEQAIVMNVQRQPGANIISTADSIRQMLPQLTESLPKSVKVTVLSDRTTNIRASVDDTQFELMMAIALVVMIIYLFLRNIPATIIPGVAVPLSLIGTFAVMVFLDFSINNLTLMALTIATGFVVDDAIVVIENISRYIEKGEKPLAAALKGAGEIGFTIISLTFSLIAVLIPLLFMGDIVGRLFREFAITLAVAILISAVVSLTLTPMMCARMLSQESLRKQNRFSRASEKMFERIIAAYGQGLAKVLNHPWLTLSVALSTLLLSVLLWVFIPKGFFPVQDNGIIQGTLQAPQSSSFANMAQRQRQVADVILQDPAVQSLTSFVGVDGTNPSLNSARLQINLKPLDERDDRVQKVIARLQTAVDKVPGVDLFLQPTQDLTIDTQVSRTQYQFTLQATSLDALSTWVPQLMEKLQQLPQLSDVSSDWQDKGLVAYVNVDRDSASRLGISMADVDNALYNAFGQRLISTIYTQANQYRVVLEHNTENTPGLAALDTIRLTSSDGGVVPLSSIAKIEQRFAPLSINHLDQFPVTTISFNVPDNYSLGDAVQAIMDTEKTLNLPVDITTQFQGSTLAFQSALGSTVWLIVAAVVAMYIVLGILYESFIHPITILSTLPTAGVGALLALLIAGSELDVIAIIGIILLIGIVKKNAIMMIDFALAAEREQGMSPRDAIYQACLLRFRPILMTTLAALLGALPLMLSTGVGAELRRPLGIGMVGGLIVSQVLTLFTTPVIYLLFDRLALWTKSRFARHEEEA</sequence>